<keyword id="KW-1003">Cell membrane</keyword>
<keyword id="KW-0963">Cytoplasm</keyword>
<keyword id="KW-0472">Membrane</keyword>
<keyword id="KW-1185">Reference proteome</keyword>
<protein>
    <recommendedName>
        <fullName evidence="3">Membrane-associated kinase regulator 5</fullName>
    </recommendedName>
</protein>
<evidence type="ECO:0000256" key="1">
    <source>
        <dbReference type="SAM" id="MobiDB-lite"/>
    </source>
</evidence>
<evidence type="ECO:0000269" key="2">
    <source>
    </source>
</evidence>
<evidence type="ECO:0000303" key="3">
    <source>
    </source>
</evidence>
<evidence type="ECO:0000312" key="4">
    <source>
        <dbReference type="Araport" id="AT5G52870"/>
    </source>
</evidence>
<evidence type="ECO:0000312" key="5">
    <source>
        <dbReference type="EMBL" id="BAB10435.1"/>
    </source>
</evidence>
<reference key="1">
    <citation type="journal article" date="1998" name="DNA Res.">
        <title>Structural analysis of Arabidopsis thaliana chromosome 5. IV. Sequence features of the regions of 1,456,315 bp covered by nineteen physically assigned P1 and TAC clones.</title>
        <authorList>
            <person name="Sato S."/>
            <person name="Kaneko T."/>
            <person name="Kotani H."/>
            <person name="Nakamura Y."/>
            <person name="Asamizu E."/>
            <person name="Miyajima N."/>
            <person name="Tabata S."/>
        </authorList>
    </citation>
    <scope>NUCLEOTIDE SEQUENCE [LARGE SCALE GENOMIC DNA]</scope>
    <source>
        <strain>cv. Columbia</strain>
    </source>
</reference>
<reference key="2">
    <citation type="journal article" date="2017" name="Plant J.">
        <title>Araport11: a complete reannotation of the Arabidopsis thaliana reference genome.</title>
        <authorList>
            <person name="Cheng C.Y."/>
            <person name="Krishnakumar V."/>
            <person name="Chan A.P."/>
            <person name="Thibaud-Nissen F."/>
            <person name="Schobel S."/>
            <person name="Town C.D."/>
        </authorList>
    </citation>
    <scope>GENOME REANNOTATION</scope>
    <source>
        <strain>cv. Columbia</strain>
    </source>
</reference>
<reference key="3">
    <citation type="journal article" date="2003" name="Science">
        <title>Empirical analysis of transcriptional activity in the Arabidopsis genome.</title>
        <authorList>
            <person name="Yamada K."/>
            <person name="Lim J."/>
            <person name="Dale J.M."/>
            <person name="Chen H."/>
            <person name="Shinn P."/>
            <person name="Palm C.J."/>
            <person name="Southwick A.M."/>
            <person name="Wu H.C."/>
            <person name="Kim C.J."/>
            <person name="Nguyen M."/>
            <person name="Pham P.K."/>
            <person name="Cheuk R.F."/>
            <person name="Karlin-Newmann G."/>
            <person name="Liu S.X."/>
            <person name="Lam B."/>
            <person name="Sakano H."/>
            <person name="Wu T."/>
            <person name="Yu G."/>
            <person name="Miranda M."/>
            <person name="Quach H.L."/>
            <person name="Tripp M."/>
            <person name="Chang C.H."/>
            <person name="Lee J.M."/>
            <person name="Toriumi M.J."/>
            <person name="Chan M.M."/>
            <person name="Tang C.C."/>
            <person name="Onodera C.S."/>
            <person name="Deng J.M."/>
            <person name="Akiyama K."/>
            <person name="Ansari Y."/>
            <person name="Arakawa T."/>
            <person name="Banh J."/>
            <person name="Banno F."/>
            <person name="Bowser L."/>
            <person name="Brooks S.Y."/>
            <person name="Carninci P."/>
            <person name="Chao Q."/>
            <person name="Choy N."/>
            <person name="Enju A."/>
            <person name="Goldsmith A.D."/>
            <person name="Gurjal M."/>
            <person name="Hansen N.F."/>
            <person name="Hayashizaki Y."/>
            <person name="Johnson-Hopson C."/>
            <person name="Hsuan V.W."/>
            <person name="Iida K."/>
            <person name="Karnes M."/>
            <person name="Khan S."/>
            <person name="Koesema E."/>
            <person name="Ishida J."/>
            <person name="Jiang P.X."/>
            <person name="Jones T."/>
            <person name="Kawai J."/>
            <person name="Kamiya A."/>
            <person name="Meyers C."/>
            <person name="Nakajima M."/>
            <person name="Narusaka M."/>
            <person name="Seki M."/>
            <person name="Sakurai T."/>
            <person name="Satou M."/>
            <person name="Tamse R."/>
            <person name="Vaysberg M."/>
            <person name="Wallender E.K."/>
            <person name="Wong C."/>
            <person name="Yamamura Y."/>
            <person name="Yuan S."/>
            <person name="Shinozaki K."/>
            <person name="Davis R.W."/>
            <person name="Theologis A."/>
            <person name="Ecker J.R."/>
        </authorList>
    </citation>
    <scope>NUCLEOTIDE SEQUENCE [LARGE SCALE MRNA]</scope>
    <source>
        <strain>cv. Columbia</strain>
    </source>
</reference>
<reference key="4">
    <citation type="journal article" date="2011" name="Genes Dev.">
        <title>Tyrosine phosphorylation controls brassinosteroid receptor activation by triggering membrane release of its kinase inhibitor.</title>
        <authorList>
            <person name="Jaillais Y."/>
            <person name="Hothorn M."/>
            <person name="Belkhadir Y."/>
            <person name="Dabi T."/>
            <person name="Nimchuk Z.L."/>
            <person name="Meyerowitz E.M."/>
            <person name="Chory J."/>
        </authorList>
    </citation>
    <scope>GENE FAMILY</scope>
    <scope>NOMENCLATURE</scope>
</reference>
<reference key="5">
    <citation type="journal article" date="2016" name="EMBO Rep.">
        <title>Arabidopsis MAKR5 is a positive effector of BAM3-dependent CLE45 signaling.</title>
        <authorList>
            <person name="Kang Y.H."/>
            <person name="Hardtke C.S."/>
        </authorList>
    </citation>
    <scope>FUNCTION</scope>
    <scope>DISRUPTION PHENOTYPE</scope>
    <scope>TISSUE SPECIFICITY</scope>
    <scope>DEVELOPMENTAL STAGE</scope>
    <scope>SUBCELLULAR LOCATION</scope>
    <source>
        <strain>cv. Columbia</strain>
    </source>
</reference>
<comment type="function">
    <text evidence="2">Positive effector of CLE45 peptide signaling (PubMed:27354416). Post-transcriptionally regulated amplifier of the CLE45 peptide signal that acts downstream of BAM3 in the regulation of the transition of root protophloem cells from proliferation to differentiation; thus preventing primary root elongation but stimulating lateral roots development (PubMed:27354416).</text>
</comment>
<comment type="subcellular location">
    <subcellularLocation>
        <location evidence="2">Cell membrane</location>
    </subcellularLocation>
    <subcellularLocation>
        <location evidence="2">Cytoplasm</location>
        <location evidence="2">Cytosol</location>
    </subcellularLocation>
    <text evidence="2">Recruited to the plasma membrane upon CLE45 peptide application.</text>
</comment>
<comment type="tissue specificity">
    <text evidence="2">Expressed in roots.</text>
</comment>
<comment type="developmental stage">
    <text evidence="2">Accumulates throughout roots vascular cylinders (PubMed:27354416). First observed early in the meristem, and later detected in procambial cells and phloem poles (PubMed:27354416). Absent from the xylem axis (PubMed:27354416).</text>
</comment>
<comment type="induction">
    <text evidence="2">Strong accumulation in developing sieve elements upon CLE45 peptide application in a BAM3-dependent manner.</text>
</comment>
<comment type="disruption phenotype">
    <text evidence="2">Partial suppression of phenotypes observed in brx mutants such as reduced root growth and smaller root meristem size (PubMed:27354416). Reduced sensitivity to externally applied CLE45 peptides in term of root growth suppression (PubMed:27354416).</text>
</comment>
<comment type="miscellaneous">
    <text evidence="2">Less stable in procambial than in phloem pole cells.</text>
</comment>
<accession>Q9FLX4</accession>
<proteinExistence type="evidence at transcript level"/>
<feature type="chain" id="PRO_0000410480" description="Membrane-associated kinase regulator 5">
    <location>
        <begin position="1"/>
        <end position="326"/>
    </location>
</feature>
<feature type="region of interest" description="Disordered" evidence="1">
    <location>
        <begin position="188"/>
        <end position="239"/>
    </location>
</feature>
<feature type="region of interest" description="Disordered" evidence="1">
    <location>
        <begin position="267"/>
        <end position="326"/>
    </location>
</feature>
<feature type="compositionally biased region" description="Low complexity" evidence="1">
    <location>
        <begin position="190"/>
        <end position="202"/>
    </location>
</feature>
<feature type="compositionally biased region" description="Low complexity" evidence="1">
    <location>
        <begin position="270"/>
        <end position="305"/>
    </location>
</feature>
<name>MAKR5_ARATH</name>
<organism>
    <name type="scientific">Arabidopsis thaliana</name>
    <name type="common">Mouse-ear cress</name>
    <dbReference type="NCBI Taxonomy" id="3702"/>
    <lineage>
        <taxon>Eukaryota</taxon>
        <taxon>Viridiplantae</taxon>
        <taxon>Streptophyta</taxon>
        <taxon>Embryophyta</taxon>
        <taxon>Tracheophyta</taxon>
        <taxon>Spermatophyta</taxon>
        <taxon>Magnoliopsida</taxon>
        <taxon>eudicotyledons</taxon>
        <taxon>Gunneridae</taxon>
        <taxon>Pentapetalae</taxon>
        <taxon>rosids</taxon>
        <taxon>malvids</taxon>
        <taxon>Brassicales</taxon>
        <taxon>Brassicaceae</taxon>
        <taxon>Camelineae</taxon>
        <taxon>Arabidopsis</taxon>
    </lineage>
</organism>
<gene>
    <name evidence="3" type="primary">MAKR5</name>
    <name evidence="4" type="ordered locus">At5g52870</name>
    <name evidence="5" type="ORF">MXC20.9</name>
</gene>
<dbReference type="EMBL" id="AB009055">
    <property type="protein sequence ID" value="BAB10435.1"/>
    <property type="molecule type" value="Genomic_DNA"/>
</dbReference>
<dbReference type="EMBL" id="CP002688">
    <property type="protein sequence ID" value="AED96270.1"/>
    <property type="molecule type" value="Genomic_DNA"/>
</dbReference>
<dbReference type="EMBL" id="AY045905">
    <property type="protein sequence ID" value="AAK76579.1"/>
    <property type="molecule type" value="mRNA"/>
</dbReference>
<dbReference type="EMBL" id="AY091212">
    <property type="protein sequence ID" value="AAM14151.1"/>
    <property type="molecule type" value="mRNA"/>
</dbReference>
<dbReference type="RefSeq" id="NP_200099.1">
    <property type="nucleotide sequence ID" value="NM_124665.5"/>
</dbReference>
<dbReference type="SMR" id="Q9FLX4"/>
<dbReference type="FunCoup" id="Q9FLX4">
    <property type="interactions" value="62"/>
</dbReference>
<dbReference type="STRING" id="3702.Q9FLX4"/>
<dbReference type="iPTMnet" id="Q9FLX4"/>
<dbReference type="PaxDb" id="3702-AT5G52870.1"/>
<dbReference type="EnsemblPlants" id="AT5G52870.1">
    <property type="protein sequence ID" value="AT5G52870.1"/>
    <property type="gene ID" value="AT5G52870"/>
</dbReference>
<dbReference type="GeneID" id="835364"/>
<dbReference type="Gramene" id="AT5G52870.1">
    <property type="protein sequence ID" value="AT5G52870.1"/>
    <property type="gene ID" value="AT5G52870"/>
</dbReference>
<dbReference type="KEGG" id="ath:AT5G52870"/>
<dbReference type="Araport" id="AT5G52870"/>
<dbReference type="TAIR" id="AT5G52870">
    <property type="gene designation" value="MAKR5"/>
</dbReference>
<dbReference type="eggNOG" id="ENOG502RYGF">
    <property type="taxonomic scope" value="Eukaryota"/>
</dbReference>
<dbReference type="HOGENOM" id="CLU_970943_0_0_1"/>
<dbReference type="InParanoid" id="Q9FLX4"/>
<dbReference type="PhylomeDB" id="Q9FLX4"/>
<dbReference type="PRO" id="PR:Q9FLX4"/>
<dbReference type="Proteomes" id="UP000006548">
    <property type="component" value="Chromosome 5"/>
</dbReference>
<dbReference type="ExpressionAtlas" id="Q9FLX4">
    <property type="expression patterns" value="baseline and differential"/>
</dbReference>
<dbReference type="GO" id="GO:0005829">
    <property type="term" value="C:cytosol"/>
    <property type="evidence" value="ECO:0000314"/>
    <property type="project" value="UniProtKB"/>
</dbReference>
<dbReference type="GO" id="GO:0005886">
    <property type="term" value="C:plasma membrane"/>
    <property type="evidence" value="ECO:0000314"/>
    <property type="project" value="UniProtKB"/>
</dbReference>
<dbReference type="GO" id="GO:0045595">
    <property type="term" value="P:regulation of cell differentiation"/>
    <property type="evidence" value="ECO:0000315"/>
    <property type="project" value="UniProtKB"/>
</dbReference>
<dbReference type="GO" id="GO:2000280">
    <property type="term" value="P:regulation of root development"/>
    <property type="evidence" value="ECO:0000315"/>
    <property type="project" value="UniProtKB"/>
</dbReference>
<dbReference type="InterPro" id="IPR039619">
    <property type="entry name" value="MAKR2/5"/>
</dbReference>
<dbReference type="PANTHER" id="PTHR33929">
    <property type="entry name" value="MEMBRANE-ASSOCIATED KINASE REGULATOR 2-RELATED"/>
    <property type="match status" value="1"/>
</dbReference>
<dbReference type="PANTHER" id="PTHR33929:SF4">
    <property type="entry name" value="MEMBRANE-ASSOCIATED KINASE REGULATOR 5"/>
    <property type="match status" value="1"/>
</dbReference>
<sequence>MEALTFMKFWLTNNTTIKPRREIRISESAVDSTTGSEDPDLDLCEGEDSFFELKISLSDFKTPKEKQRLETTTTTTTYSVSNKSKVLPFVDISSKPQQSPTTLLKSGQKFRAFSFKKSEKSTTTEKKKEENNRTSLNVRFRVDDETTTTSFRKTASIARSQQTDDTMFDDSVSKRFFSLIKPLYTKSTKKQSSSTITSPTSSPATREKQRSNIPSGMRSVRRQLGKSRSASAAIGGMSPANRIDESLQVQQDGIQSAILHCKKSFHGSRESSLLSRSTSESSSQEKLSTSSSEDSYLFSRISSDSISEKSMDSLTSIKEQREKISD</sequence>